<dbReference type="EC" id="1.1.1.308" evidence="3"/>
<dbReference type="EMBL" id="CP000092">
    <property type="protein sequence ID" value="AAZ65418.1"/>
    <property type="molecule type" value="Genomic_DNA"/>
</dbReference>
<dbReference type="PDB" id="8V35">
    <property type="method" value="X-ray"/>
    <property type="resolution" value="1.94 A"/>
    <property type="chains" value="A/B=1-436"/>
</dbReference>
<dbReference type="PDB" id="8V36">
    <property type="method" value="X-ray"/>
    <property type="resolution" value="2.23 A"/>
    <property type="chains" value="A/B=1-436"/>
</dbReference>
<dbReference type="PDB" id="8V37">
    <property type="method" value="X-ray"/>
    <property type="resolution" value="2.23 A"/>
    <property type="chains" value="A/B=1-436"/>
</dbReference>
<dbReference type="PDB" id="9CP7">
    <property type="method" value="X-ray"/>
    <property type="resolution" value="1.75 A"/>
    <property type="chains" value="A/B=1-436"/>
</dbReference>
<dbReference type="PDB" id="9CP8">
    <property type="method" value="X-ray"/>
    <property type="resolution" value="1.57 A"/>
    <property type="chains" value="A/B=1-436"/>
</dbReference>
<dbReference type="PDB" id="9CP9">
    <property type="method" value="X-ray"/>
    <property type="resolution" value="2.01 A"/>
    <property type="chains" value="A/B=1-436"/>
</dbReference>
<dbReference type="PDBsum" id="8V35"/>
<dbReference type="PDBsum" id="8V36"/>
<dbReference type="PDBsum" id="8V37"/>
<dbReference type="PDBsum" id="9CP7"/>
<dbReference type="PDBsum" id="9CP8"/>
<dbReference type="PDBsum" id="9CP9"/>
<dbReference type="SMR" id="Q46N53"/>
<dbReference type="KEGG" id="reu:Reut_C6092"/>
<dbReference type="eggNOG" id="COG0141">
    <property type="taxonomic scope" value="Bacteria"/>
</dbReference>
<dbReference type="HOGENOM" id="CLU_006732_3_0_4"/>
<dbReference type="OrthoDB" id="9805269at2"/>
<dbReference type="BioCyc" id="MetaCyc:MONOMER-15897"/>
<dbReference type="BRENDA" id="1.1.1.308">
    <property type="organism ID" value="11423"/>
</dbReference>
<dbReference type="GO" id="GO:0005829">
    <property type="term" value="C:cytosol"/>
    <property type="evidence" value="ECO:0007669"/>
    <property type="project" value="TreeGrafter"/>
</dbReference>
<dbReference type="GO" id="GO:0004399">
    <property type="term" value="F:histidinol dehydrogenase activity"/>
    <property type="evidence" value="ECO:0007669"/>
    <property type="project" value="InterPro"/>
</dbReference>
<dbReference type="GO" id="GO:0051287">
    <property type="term" value="F:NAD binding"/>
    <property type="evidence" value="ECO:0007669"/>
    <property type="project" value="InterPro"/>
</dbReference>
<dbReference type="GO" id="GO:0008270">
    <property type="term" value="F:zinc ion binding"/>
    <property type="evidence" value="ECO:0007669"/>
    <property type="project" value="UniProtKB-UniRule"/>
</dbReference>
<dbReference type="GO" id="GO:0000105">
    <property type="term" value="P:L-histidine biosynthetic process"/>
    <property type="evidence" value="ECO:0007669"/>
    <property type="project" value="InterPro"/>
</dbReference>
<dbReference type="CDD" id="cd06572">
    <property type="entry name" value="Histidinol_dh"/>
    <property type="match status" value="1"/>
</dbReference>
<dbReference type="FunFam" id="3.40.50.1980:FF:000001">
    <property type="entry name" value="Histidinol dehydrogenase"/>
    <property type="match status" value="1"/>
</dbReference>
<dbReference type="Gene3D" id="1.20.5.1300">
    <property type="match status" value="1"/>
</dbReference>
<dbReference type="Gene3D" id="3.40.50.1980">
    <property type="entry name" value="Nitrogenase molybdenum iron protein domain"/>
    <property type="match status" value="2"/>
</dbReference>
<dbReference type="HAMAP" id="MF_02228">
    <property type="entry name" value="Sulfopropanediol_dehydrog"/>
    <property type="match status" value="1"/>
</dbReference>
<dbReference type="InterPro" id="IPR016161">
    <property type="entry name" value="Ald_DH/histidinol_DH"/>
</dbReference>
<dbReference type="InterPro" id="IPR001692">
    <property type="entry name" value="Histidinol_DH_CS"/>
</dbReference>
<dbReference type="InterPro" id="IPR022695">
    <property type="entry name" value="Histidinol_DH_monofunct"/>
</dbReference>
<dbReference type="InterPro" id="IPR012131">
    <property type="entry name" value="Hstdl_DH"/>
</dbReference>
<dbReference type="InterPro" id="IPR043678">
    <property type="entry name" value="Sulfopropanediol_dehydrog_HpsN"/>
</dbReference>
<dbReference type="NCBIfam" id="TIGR00069">
    <property type="entry name" value="hisD"/>
    <property type="match status" value="1"/>
</dbReference>
<dbReference type="PANTHER" id="PTHR21256:SF14">
    <property type="entry name" value="HISTIDINOL DEHYDROGENASE"/>
    <property type="match status" value="1"/>
</dbReference>
<dbReference type="PANTHER" id="PTHR21256">
    <property type="entry name" value="HISTIDINOL DEHYDROGENASE HDH"/>
    <property type="match status" value="1"/>
</dbReference>
<dbReference type="Pfam" id="PF00815">
    <property type="entry name" value="Histidinol_dh"/>
    <property type="match status" value="1"/>
</dbReference>
<dbReference type="PIRSF" id="PIRSF000099">
    <property type="entry name" value="Histidinol_dh"/>
    <property type="match status" value="1"/>
</dbReference>
<dbReference type="PRINTS" id="PR00083">
    <property type="entry name" value="HOLDHDRGNASE"/>
</dbReference>
<dbReference type="SUPFAM" id="SSF53720">
    <property type="entry name" value="ALDH-like"/>
    <property type="match status" value="1"/>
</dbReference>
<dbReference type="PROSITE" id="PS00611">
    <property type="entry name" value="HISOL_DEHYDROGENASE"/>
    <property type="match status" value="1"/>
</dbReference>
<organism>
    <name type="scientific">Cupriavidus pinatubonensis (strain JMP 134 / LMG 1197)</name>
    <name type="common">Cupriavidus necator (strain JMP 134)</name>
    <dbReference type="NCBI Taxonomy" id="264198"/>
    <lineage>
        <taxon>Bacteria</taxon>
        <taxon>Pseudomonadati</taxon>
        <taxon>Pseudomonadota</taxon>
        <taxon>Betaproteobacteria</taxon>
        <taxon>Burkholderiales</taxon>
        <taxon>Burkholderiaceae</taxon>
        <taxon>Cupriavidus</taxon>
    </lineage>
</organism>
<feature type="chain" id="PRO_0000135827" description="Sulfopropanediol 3-dehydrogenase">
    <location>
        <begin position="1"/>
        <end position="436"/>
    </location>
</feature>
<feature type="active site" description="Proton acceptor" evidence="1 2">
    <location>
        <position position="318"/>
    </location>
</feature>
<feature type="active site" description="Proton acceptor" evidence="1 2">
    <location>
        <position position="319"/>
    </location>
</feature>
<feature type="binding site" evidence="1 2">
    <location>
        <position position="118"/>
    </location>
    <ligand>
        <name>NAD(+)</name>
        <dbReference type="ChEBI" id="CHEBI:57540"/>
    </ligand>
</feature>
<feature type="binding site" evidence="1 2">
    <location>
        <position position="180"/>
    </location>
    <ligand>
        <name>NAD(+)</name>
        <dbReference type="ChEBI" id="CHEBI:57540"/>
    </ligand>
</feature>
<feature type="binding site" evidence="1 2">
    <location>
        <position position="203"/>
    </location>
    <ligand>
        <name>NAD(+)</name>
        <dbReference type="ChEBI" id="CHEBI:57540"/>
    </ligand>
</feature>
<feature type="binding site" evidence="1 2">
    <location>
        <position position="248"/>
    </location>
    <ligand>
        <name>Zn(2+)</name>
        <dbReference type="ChEBI" id="CHEBI:29105"/>
    </ligand>
</feature>
<feature type="binding site" evidence="1 2">
    <location>
        <position position="251"/>
    </location>
    <ligand>
        <name>Zn(2+)</name>
        <dbReference type="ChEBI" id="CHEBI:29105"/>
    </ligand>
</feature>
<feature type="binding site" evidence="1 2">
    <location>
        <position position="352"/>
    </location>
    <ligand>
        <name>Zn(2+)</name>
        <dbReference type="ChEBI" id="CHEBI:29105"/>
    </ligand>
</feature>
<feature type="binding site" evidence="1 2">
    <location>
        <position position="411"/>
    </location>
    <ligand>
        <name>Zn(2+)</name>
        <dbReference type="ChEBI" id="CHEBI:29105"/>
    </ligand>
</feature>
<feature type="strand" evidence="6">
    <location>
        <begin position="3"/>
        <end position="6"/>
    </location>
</feature>
<feature type="turn" evidence="6">
    <location>
        <begin position="12"/>
        <end position="15"/>
    </location>
</feature>
<feature type="helix" evidence="6">
    <location>
        <begin position="16"/>
        <end position="33"/>
    </location>
</feature>
<feature type="helix" evidence="6">
    <location>
        <begin position="35"/>
        <end position="46"/>
    </location>
</feature>
<feature type="helix" evidence="6">
    <location>
        <begin position="56"/>
        <end position="63"/>
    </location>
</feature>
<feature type="helix" evidence="6">
    <location>
        <begin position="68"/>
        <end position="90"/>
    </location>
</feature>
<feature type="strand" evidence="6">
    <location>
        <begin position="95"/>
        <end position="98"/>
    </location>
</feature>
<feature type="strand" evidence="6">
    <location>
        <begin position="103"/>
        <end position="111"/>
    </location>
</feature>
<feature type="strand" evidence="6">
    <location>
        <begin position="113"/>
        <end position="119"/>
    </location>
</feature>
<feature type="strand" evidence="6">
    <location>
        <begin position="121"/>
        <end position="125"/>
    </location>
</feature>
<feature type="helix" evidence="6">
    <location>
        <begin position="127"/>
        <end position="139"/>
    </location>
</feature>
<feature type="strand" evidence="6">
    <location>
        <begin position="143"/>
        <end position="149"/>
    </location>
</feature>
<feature type="strand" evidence="6">
    <location>
        <begin position="155"/>
        <end position="157"/>
    </location>
</feature>
<feature type="helix" evidence="6">
    <location>
        <begin position="159"/>
        <end position="168"/>
    </location>
</feature>
<feature type="strand" evidence="6">
    <location>
        <begin position="171"/>
        <end position="175"/>
    </location>
</feature>
<feature type="helix" evidence="6">
    <location>
        <begin position="178"/>
        <end position="187"/>
    </location>
</feature>
<feature type="turn" evidence="6">
    <location>
        <begin position="188"/>
        <end position="191"/>
    </location>
</feature>
<feature type="strand" evidence="6">
    <location>
        <begin position="196"/>
        <end position="199"/>
    </location>
</feature>
<feature type="helix" evidence="6">
    <location>
        <begin position="204"/>
        <end position="213"/>
    </location>
</feature>
<feature type="strand" evidence="6">
    <location>
        <begin position="217"/>
        <end position="220"/>
    </location>
</feature>
<feature type="strand" evidence="6">
    <location>
        <begin position="228"/>
        <end position="232"/>
    </location>
</feature>
<feature type="helix" evidence="6">
    <location>
        <begin position="238"/>
        <end position="249"/>
    </location>
</feature>
<feature type="strand" evidence="6">
    <location>
        <begin position="257"/>
        <end position="262"/>
    </location>
</feature>
<feature type="helix" evidence="6">
    <location>
        <begin position="264"/>
        <end position="279"/>
    </location>
</feature>
<feature type="helix" evidence="6">
    <location>
        <begin position="283"/>
        <end position="296"/>
    </location>
</feature>
<feature type="strand" evidence="6">
    <location>
        <begin position="298"/>
        <end position="301"/>
    </location>
</feature>
<feature type="helix" evidence="6">
    <location>
        <begin position="305"/>
        <end position="315"/>
    </location>
</feature>
<feature type="strand" evidence="6">
    <location>
        <begin position="318"/>
        <end position="325"/>
    </location>
</feature>
<feature type="helix" evidence="6">
    <location>
        <begin position="327"/>
        <end position="333"/>
    </location>
</feature>
<feature type="strand" evidence="6">
    <location>
        <begin position="338"/>
        <end position="346"/>
    </location>
</feature>
<feature type="helix" evidence="6">
    <location>
        <begin position="348"/>
        <end position="353"/>
    </location>
</feature>
<feature type="strand" evidence="6">
    <location>
        <begin position="355"/>
        <end position="357"/>
    </location>
</feature>
<feature type="helix" evidence="6">
    <location>
        <begin position="366"/>
        <end position="368"/>
    </location>
</feature>
<feature type="helix" evidence="6">
    <location>
        <begin position="375"/>
        <end position="378"/>
    </location>
</feature>
<feature type="strand" evidence="6">
    <location>
        <begin position="379"/>
        <end position="387"/>
    </location>
</feature>
<feature type="turn" evidence="6">
    <location>
        <begin position="389"/>
        <end position="391"/>
    </location>
</feature>
<feature type="helix" evidence="6">
    <location>
        <begin position="392"/>
        <end position="406"/>
    </location>
</feature>
<feature type="helix" evidence="6">
    <location>
        <begin position="409"/>
        <end position="422"/>
    </location>
</feature>
<name>HPSN_CUPPJ</name>
<gene>
    <name evidence="4" type="primary">hpsN</name>
    <name type="ordered locus">Reut_C6092</name>
</gene>
<keyword id="KW-0002">3D-structure</keyword>
<keyword id="KW-0479">Metal-binding</keyword>
<keyword id="KW-0520">NAD</keyword>
<keyword id="KW-0560">Oxidoreductase</keyword>
<keyword id="KW-0614">Plasmid</keyword>
<keyword id="KW-0862">Zinc</keyword>
<sequence>MISYLKKAEKTPQTETATAQKVVTEMLAEIQARGKDAVRQYAKQLDGWSGDIVLTPDQIREQTKDVPAGVRADIDFAIRQVTDFALAQRESLKEFSVELHPGVTAGQRVLPVNVVGCYAPAGRYAHIASAYMGVATAKAAGVKTVVACSSPFRGQGIHPHVLYAFQAAGADVIMALGGVQAIASMAYGLFTGKPADVVVGPGNKFVAEAKRSLYGQVGIDVFAGPSEVAVIADETADPAIVASDLVGQAEHGHESPAWLFTTSRDLADRVMALVPELIAKLPPTARDAATAAWRDYGEVILCGTREEVVEISDRYASEHLEVHTADLDWWLANLTCYGSLFLGEETTVAFGDKTSGPNHVLPTKGAARYSGGLSVHKFMKTLTWQQMTREATRQIGQVTARISRLEGMEAHARTADDRMAKYFPNASFEMGTPVEV</sequence>
<comment type="function">
    <text evidence="3">Catalyzes the NAD-dependent oxidation of (R)-2,3-dihydroxypropane-1-sulfonate to (R)-3-sulfolactate.</text>
</comment>
<comment type="catalytic activity">
    <reaction evidence="3">
        <text>(2R)-3-sulfopropanediol + 2 NAD(+) + H2O = (2R)-3-sulfolactate + 2 NADH + 3 H(+)</text>
        <dbReference type="Rhea" id="RHEA:28074"/>
        <dbReference type="ChEBI" id="CHEBI:15377"/>
        <dbReference type="ChEBI" id="CHEBI:15378"/>
        <dbReference type="ChEBI" id="CHEBI:57540"/>
        <dbReference type="ChEBI" id="CHEBI:57945"/>
        <dbReference type="ChEBI" id="CHEBI:58738"/>
        <dbReference type="ChEBI" id="CHEBI:60997"/>
        <dbReference type="EC" id="1.1.1.308"/>
    </reaction>
</comment>
<comment type="cofactor">
    <cofactor evidence="1">
        <name>Zn(2+)</name>
        <dbReference type="ChEBI" id="CHEBI:29105"/>
    </cofactor>
    <text evidence="1">Binds 1 zinc ion per subunit.</text>
</comment>
<comment type="biophysicochemical properties">
    <kinetics>
        <KM evidence="3">160 uM for NAD(+)</KM>
        <KM evidence="3">460 uM for (R)-2,3-dihydroxypropane-1-sulfonate</KM>
        <Vmax evidence="3">95.0 nmol/sec/mg enzyme</Vmax>
    </kinetics>
    <phDependence>
        <text evidence="3">Optimum pH is 9-10.</text>
    </phDependence>
</comment>
<comment type="similarity">
    <text evidence="2 5">Belongs to the histidinol dehydrogenase family. HpsN subfamily.</text>
</comment>
<proteinExistence type="evidence at protein level"/>
<geneLocation type="plasmid">
    <name>megaplasmid Reut</name>
</geneLocation>
<protein>
    <recommendedName>
        <fullName>Sulfopropanediol 3-dehydrogenase</fullName>
        <ecNumber evidence="3">1.1.1.308</ecNumber>
    </recommendedName>
    <alternativeName>
        <fullName>2,3-dihydroxypropane-1-sulfonate 3-dehydrogenase (sulfolactate forming)</fullName>
        <shortName>DHPS 3-dehydrogenase (sulfolactate forming)</shortName>
    </alternativeName>
</protein>
<accession>Q46N53</accession>
<evidence type="ECO:0000250" key="1">
    <source>
        <dbReference type="UniProtKB" id="P06988"/>
    </source>
</evidence>
<evidence type="ECO:0000255" key="2">
    <source>
        <dbReference type="HAMAP-Rule" id="MF_02228"/>
    </source>
</evidence>
<evidence type="ECO:0000269" key="3">
    <source>
    </source>
</evidence>
<evidence type="ECO:0000303" key="4">
    <source>
    </source>
</evidence>
<evidence type="ECO:0000305" key="5"/>
<evidence type="ECO:0007829" key="6">
    <source>
        <dbReference type="PDB" id="9CP8"/>
    </source>
</evidence>
<reference key="1">
    <citation type="journal article" date="2010" name="PLoS ONE">
        <title>The complete multipartite genome sequence of Cupriavidus necator JMP134, a versatile pollutant degrader.</title>
        <authorList>
            <person name="Lykidis A."/>
            <person name="Perez-Pantoja D."/>
            <person name="Ledger T."/>
            <person name="Mavromatis K."/>
            <person name="Anderson I.J."/>
            <person name="Ivanova N.N."/>
            <person name="Hooper S.D."/>
            <person name="Lapidus A."/>
            <person name="Lucas S."/>
            <person name="Gonzalez B."/>
            <person name="Kyrpides N.C."/>
        </authorList>
    </citation>
    <scope>NUCLEOTIDE SEQUENCE [LARGE SCALE GENOMIC DNA]</scope>
    <source>
        <strain>JMP134 / LMG 1197</strain>
    </source>
</reference>
<reference key="2">
    <citation type="journal article" date="2010" name="Microbiology">
        <title>2,3-Dihydroxypropane-1-sulfonate degraded by Cupriavidus pinatubonensis JMP134: purification of dihydroxypropanesulfonate 3-dehydrogenase.</title>
        <authorList>
            <person name="Mayer J."/>
            <person name="Huhn T."/>
            <person name="Habeck M."/>
            <person name="Denger K."/>
            <person name="Hollemeyer K."/>
            <person name="Cook A.M."/>
        </authorList>
    </citation>
    <scope>FUNCTION</scope>
    <scope>CATALYTIC ACTIVITY</scope>
    <scope>BIOPHYSICOCHEMICAL PROPERTIES</scope>
</reference>